<evidence type="ECO:0000250" key="1"/>
<evidence type="ECO:0000256" key="2">
    <source>
        <dbReference type="SAM" id="MobiDB-lite"/>
    </source>
</evidence>
<evidence type="ECO:0007829" key="3">
    <source>
        <dbReference type="PDB" id="6BWB"/>
    </source>
</evidence>
<reference key="1">
    <citation type="journal article" date="2000" name="J. Virol.">
        <title>The exceptionally large genome of Hendra virus: support for creation of a new genus within the family Paramyxoviridae.</title>
        <authorList>
            <person name="Wang L.-F."/>
            <person name="Yu M."/>
            <person name="Hansson E."/>
            <person name="Pritchard L.I."/>
            <person name="Shiell B."/>
            <person name="Michalski W.P."/>
            <person name="Eaton B.T."/>
        </authorList>
    </citation>
    <scope>NUCLEOTIDE SEQUENCE [GENOMIC RNA]</scope>
</reference>
<proteinExistence type="evidence at protein level"/>
<accession>P0C1C6</accession>
<organism>
    <name type="scientific">Hendra virus (isolate Horse/Autralia/Hendra/1994)</name>
    <dbReference type="NCBI Taxonomy" id="928303"/>
    <lineage>
        <taxon>Viruses</taxon>
        <taxon>Riboviria</taxon>
        <taxon>Orthornavirae</taxon>
        <taxon>Negarnaviricota</taxon>
        <taxon>Haploviricotina</taxon>
        <taxon>Monjiviricetes</taxon>
        <taxon>Mononegavirales</taxon>
        <taxon>Paramyxoviridae</taxon>
        <taxon>Orthoparamyxovirinae</taxon>
        <taxon>Henipavirus</taxon>
        <taxon>Henipavirus hendraense</taxon>
    </lineage>
</organism>
<feature type="chain" id="PRO_0000236016" description="Protein W">
    <location>
        <begin position="1"/>
        <end position="448"/>
    </location>
</feature>
<feature type="region of interest" description="Disordered" evidence="2">
    <location>
        <begin position="26"/>
        <end position="104"/>
    </location>
</feature>
<feature type="region of interest" description="Disordered" evidence="2">
    <location>
        <begin position="193"/>
        <end position="406"/>
    </location>
</feature>
<feature type="compositionally biased region" description="Polar residues" evidence="2">
    <location>
        <begin position="28"/>
        <end position="37"/>
    </location>
</feature>
<feature type="compositionally biased region" description="Polar residues" evidence="2">
    <location>
        <begin position="77"/>
        <end position="96"/>
    </location>
</feature>
<feature type="compositionally biased region" description="Acidic residues" evidence="2">
    <location>
        <begin position="240"/>
        <end position="252"/>
    </location>
</feature>
<feature type="compositionally biased region" description="Basic and acidic residues" evidence="2">
    <location>
        <begin position="296"/>
        <end position="317"/>
    </location>
</feature>
<feature type="modified residue" description="Phosphoserine; by host" evidence="1">
    <location>
        <position position="257"/>
    </location>
</feature>
<feature type="modified residue" description="Phosphoserine; by host" evidence="1">
    <location>
        <position position="350"/>
    </location>
</feature>
<feature type="turn" evidence="3">
    <location>
        <begin position="427"/>
        <end position="430"/>
    </location>
</feature>
<comment type="RNA editing">
    <location>
        <position position="407" evidence="1"/>
    </location>
    <text evidence="1">Partially edited. RNA editing at this position consists of an insertion of one or two guanine nucleotides. The sequence displayed here is the W protein, derived from the +2G edited RNA. The unedited RNA gives rise to the P protein (AC O55778), the +1G edited RNA gives rise to the V protein (AC O55777) (By similarity).</text>
</comment>
<comment type="miscellaneous">
    <text>The P/V/C gene has two overlapping open reading frames. One encodes the P/V/W proteins and the other the C protein.</text>
</comment>
<protein>
    <recommendedName>
        <fullName>Protein W</fullName>
    </recommendedName>
</protein>
<name>W_HENDH</name>
<dbReference type="EMBL" id="AF017149">
    <property type="status" value="NOT_ANNOTATED_CDS"/>
    <property type="molecule type" value="Genomic_RNA"/>
</dbReference>
<dbReference type="PDB" id="6BW1">
    <property type="method" value="X-ray"/>
    <property type="resolution" value="2.20 A"/>
    <property type="chains" value="C=409-448"/>
</dbReference>
<dbReference type="PDB" id="6BW9">
    <property type="method" value="X-ray"/>
    <property type="resolution" value="1.60 A"/>
    <property type="chains" value="B=409-448"/>
</dbReference>
<dbReference type="PDB" id="6BWA">
    <property type="method" value="X-ray"/>
    <property type="resolution" value="2.20 A"/>
    <property type="chains" value="B=409-448"/>
</dbReference>
<dbReference type="PDB" id="6BWB">
    <property type="method" value="X-ray"/>
    <property type="resolution" value="2.30 A"/>
    <property type="chains" value="B=409-448"/>
</dbReference>
<dbReference type="PDBsum" id="6BW1"/>
<dbReference type="PDBsum" id="6BW9"/>
<dbReference type="PDBsum" id="6BWA"/>
<dbReference type="PDBsum" id="6BWB"/>
<dbReference type="SASBDB" id="P0C1C6"/>
<dbReference type="SMR" id="P0C1C6"/>
<dbReference type="IntAct" id="P0C1C6">
    <property type="interactions" value="54"/>
</dbReference>
<dbReference type="Proteomes" id="UP000008771">
    <property type="component" value="Segment"/>
</dbReference>
<dbReference type="GO" id="GO:0042025">
    <property type="term" value="C:host cell nucleus"/>
    <property type="evidence" value="ECO:0000314"/>
    <property type="project" value="DisProt"/>
</dbReference>
<dbReference type="GO" id="GO:1990000">
    <property type="term" value="P:amyloid fibril formation"/>
    <property type="evidence" value="ECO:0000314"/>
    <property type="project" value="DisProt"/>
</dbReference>
<dbReference type="GO" id="GO:1901344">
    <property type="term" value="P:response to leptomycin B"/>
    <property type="evidence" value="ECO:0000314"/>
    <property type="project" value="DisProt"/>
</dbReference>
<dbReference type="Gene3D" id="6.10.250.2490">
    <property type="match status" value="1"/>
</dbReference>
<dbReference type="InterPro" id="IPR035430">
    <property type="entry name" value="Paramyxo_PNT"/>
</dbReference>
<dbReference type="InterPro" id="IPR025909">
    <property type="entry name" value="Soyouz_module"/>
</dbReference>
<dbReference type="Pfam" id="PF14320">
    <property type="entry name" value="Paramyxo_PNT"/>
    <property type="match status" value="1"/>
</dbReference>
<dbReference type="Pfam" id="PF14313">
    <property type="entry name" value="Soyouz_module"/>
    <property type="match status" value="1"/>
</dbReference>
<organismHost>
    <name type="scientific">Equus caballus</name>
    <name type="common">Horse</name>
    <dbReference type="NCBI Taxonomy" id="9796"/>
</organismHost>
<organismHost>
    <name type="scientific">Homo sapiens</name>
    <name type="common">Human</name>
    <dbReference type="NCBI Taxonomy" id="9606"/>
</organismHost>
<organismHost>
    <name type="scientific">Pteropus alecto</name>
    <name type="common">Black flying fox</name>
    <dbReference type="NCBI Taxonomy" id="9402"/>
</organismHost>
<organismHost>
    <name type="scientific">Pteropus poliocephalus</name>
    <name type="common">Grey-headed flying fox</name>
    <dbReference type="NCBI Taxonomy" id="9403"/>
</organismHost>
<organismHost>
    <name type="scientific">Pteropus scapulatus</name>
    <name type="common">Little red flying fox</name>
    <dbReference type="NCBI Taxonomy" id="94117"/>
</organismHost>
<sequence>MDKLDLVNDGLDIIDFIQKNQKEIQKTYGRSSIQQPSTKDRTRAWEDFLQSTSGEHEQAEGGMPKNDGGTEGRNVEDLSSVTSSDGTIGQRVSNTRAWAEDPDDIQLDPMVTDVVYHDHGGECTGHGPSSSPERGWSYHMSGTHDGNVRAVPDTKVLPNAPKTTVPEEVREIDLIGLEDKFASAGLNPAAVPFVPKNQSTPTEEPPVIPEYYYGSGRRGDLSKSPPRGNVNLDSIKIYTSDDEDENQLEYEDEFAKSSSEVVIDTTPEDNDSINQEEVVGDPSDQGLEHPFPLGKFPEKEETPDVRRKDSLMQDSCKRGGVPKRLPMLSEEFECSGSDDPIIQELEREGSHPGGSLRLREPPQSSGNSRNQPDRQLKTGDAASPGGVQRPGTPMPKSRIMPIKKGAQTRSLNMLGRKTCLGRRVVQPGMFADYPPTKKARVLLRRMSN</sequence>
<keyword id="KW-0002">3D-structure</keyword>
<keyword id="KW-0597">Phosphoprotein</keyword>
<keyword id="KW-1185">Reference proteome</keyword>
<keyword id="KW-0691">RNA editing</keyword>
<gene>
    <name type="primary">P/V/C</name>
</gene>